<sequence length="368" mass="41463">MKILVALSGGVDSAVSAKILKDAGYEIEGCYMKLHGRDDYHAKNIEKVQDVGNFLEIKTHILDLCDDFKREVFEPFLQTYKVGKTPNPCALCNRTIKFGKFLDFARSKGCDKIATGHYAKIENNLIKSAVDLSKDQSYFLANIEPRVIPNIVFPLGNMLKKDVKKFAASFPELEKISKSSESNEICFVENTYIDVLREFYKTETPGIVRNLQGEIVGKHNGYMNFTVGKRRGFDVFGAHEPHYVVKIDAKKNEIVVGSKADLDKNEFETQNFNAFLNIDEILKMDEIYVKIRYRSAKIACKIEISLNDNLNNESLTDKNLNFENSDFLNNQDLKAKIILKTPANGVASGQLAVFYDKSDCVIASGFIA</sequence>
<protein>
    <recommendedName>
        <fullName evidence="1">tRNA-specific 2-thiouridylase MnmA</fullName>
        <ecNumber evidence="1">2.8.1.13</ecNumber>
    </recommendedName>
</protein>
<feature type="chain" id="PRO_0000349571" description="tRNA-specific 2-thiouridylase MnmA">
    <location>
        <begin position="1"/>
        <end position="368"/>
    </location>
</feature>
<feature type="region of interest" description="Interaction with tRNA" evidence="1">
    <location>
        <begin position="134"/>
        <end position="136"/>
    </location>
</feature>
<feature type="region of interest" description="Interaction with tRNA" evidence="1">
    <location>
        <begin position="292"/>
        <end position="293"/>
    </location>
</feature>
<feature type="active site" description="Nucleophile" evidence="1">
    <location>
        <position position="92"/>
    </location>
</feature>
<feature type="active site" description="Cysteine persulfide intermediate" evidence="1">
    <location>
        <position position="186"/>
    </location>
</feature>
<feature type="binding site" evidence="1">
    <location>
        <begin position="6"/>
        <end position="13"/>
    </location>
    <ligand>
        <name>ATP</name>
        <dbReference type="ChEBI" id="CHEBI:30616"/>
    </ligand>
</feature>
<feature type="binding site" evidence="1">
    <location>
        <position position="32"/>
    </location>
    <ligand>
        <name>ATP</name>
        <dbReference type="ChEBI" id="CHEBI:30616"/>
    </ligand>
</feature>
<feature type="binding site" evidence="1">
    <location>
        <position position="116"/>
    </location>
    <ligand>
        <name>ATP</name>
        <dbReference type="ChEBI" id="CHEBI:30616"/>
    </ligand>
</feature>
<feature type="site" description="Interaction with tRNA" evidence="1">
    <location>
        <position position="117"/>
    </location>
</feature>
<feature type="site" description="Interaction with tRNA" evidence="1">
    <location>
        <position position="350"/>
    </location>
</feature>
<feature type="disulfide bond" description="Alternate" evidence="1">
    <location>
        <begin position="92"/>
        <end position="186"/>
    </location>
</feature>
<evidence type="ECO:0000255" key="1">
    <source>
        <dbReference type="HAMAP-Rule" id="MF_00144"/>
    </source>
</evidence>
<reference key="1">
    <citation type="submission" date="2007-07" db="EMBL/GenBank/DDBJ databases">
        <title>Complete genome sequence of Campylobacter hominis ATCC BAA-381, a commensal isolated from the human gastrointestinal tract.</title>
        <authorList>
            <person name="Fouts D.E."/>
            <person name="Mongodin E.F."/>
            <person name="Puiu D."/>
            <person name="Sebastian Y."/>
            <person name="Miller W.G."/>
            <person name="Mandrell R.E."/>
            <person name="Nelson K.E."/>
        </authorList>
    </citation>
    <scope>NUCLEOTIDE SEQUENCE [LARGE SCALE GENOMIC DNA]</scope>
    <source>
        <strain>ATCC BAA-381 / DSM 21671 / CCUG 45161 / LMG 19568 / NCTC 13146 / CH001A</strain>
    </source>
</reference>
<organism>
    <name type="scientific">Campylobacter hominis (strain ATCC BAA-381 / DSM 21671 / CCUG 45161 / LMG 19568 / NCTC 13146 / CH001A)</name>
    <dbReference type="NCBI Taxonomy" id="360107"/>
    <lineage>
        <taxon>Bacteria</taxon>
        <taxon>Pseudomonadati</taxon>
        <taxon>Campylobacterota</taxon>
        <taxon>Epsilonproteobacteria</taxon>
        <taxon>Campylobacterales</taxon>
        <taxon>Campylobacteraceae</taxon>
        <taxon>Campylobacter</taxon>
    </lineage>
</organism>
<accession>A7I2L9</accession>
<comment type="function">
    <text evidence="1">Catalyzes the 2-thiolation of uridine at the wobble position (U34) of tRNA, leading to the formation of s(2)U34.</text>
</comment>
<comment type="catalytic activity">
    <reaction evidence="1">
        <text>S-sulfanyl-L-cysteinyl-[protein] + uridine(34) in tRNA + AH2 + ATP = 2-thiouridine(34) in tRNA + L-cysteinyl-[protein] + A + AMP + diphosphate + H(+)</text>
        <dbReference type="Rhea" id="RHEA:47032"/>
        <dbReference type="Rhea" id="RHEA-COMP:10131"/>
        <dbReference type="Rhea" id="RHEA-COMP:11726"/>
        <dbReference type="Rhea" id="RHEA-COMP:11727"/>
        <dbReference type="Rhea" id="RHEA-COMP:11728"/>
        <dbReference type="ChEBI" id="CHEBI:13193"/>
        <dbReference type="ChEBI" id="CHEBI:15378"/>
        <dbReference type="ChEBI" id="CHEBI:17499"/>
        <dbReference type="ChEBI" id="CHEBI:29950"/>
        <dbReference type="ChEBI" id="CHEBI:30616"/>
        <dbReference type="ChEBI" id="CHEBI:33019"/>
        <dbReference type="ChEBI" id="CHEBI:61963"/>
        <dbReference type="ChEBI" id="CHEBI:65315"/>
        <dbReference type="ChEBI" id="CHEBI:87170"/>
        <dbReference type="ChEBI" id="CHEBI:456215"/>
        <dbReference type="EC" id="2.8.1.13"/>
    </reaction>
</comment>
<comment type="subcellular location">
    <subcellularLocation>
        <location evidence="1">Cytoplasm</location>
    </subcellularLocation>
</comment>
<comment type="similarity">
    <text evidence="1">Belongs to the MnmA/TRMU family.</text>
</comment>
<name>MNMA_CAMHC</name>
<dbReference type="EC" id="2.8.1.13" evidence="1"/>
<dbReference type="EMBL" id="CP000776">
    <property type="protein sequence ID" value="ABS52060.1"/>
    <property type="molecule type" value="Genomic_DNA"/>
</dbReference>
<dbReference type="RefSeq" id="WP_012109060.1">
    <property type="nucleotide sequence ID" value="NC_009714.1"/>
</dbReference>
<dbReference type="SMR" id="A7I2L9"/>
<dbReference type="STRING" id="360107.CHAB381_1206"/>
<dbReference type="KEGG" id="cha:CHAB381_1206"/>
<dbReference type="eggNOG" id="COG0482">
    <property type="taxonomic scope" value="Bacteria"/>
</dbReference>
<dbReference type="HOGENOM" id="CLU_035188_0_0_7"/>
<dbReference type="OrthoDB" id="9800696at2"/>
<dbReference type="Proteomes" id="UP000002407">
    <property type="component" value="Chromosome"/>
</dbReference>
<dbReference type="GO" id="GO:0005737">
    <property type="term" value="C:cytoplasm"/>
    <property type="evidence" value="ECO:0007669"/>
    <property type="project" value="UniProtKB-SubCell"/>
</dbReference>
<dbReference type="GO" id="GO:0005524">
    <property type="term" value="F:ATP binding"/>
    <property type="evidence" value="ECO:0007669"/>
    <property type="project" value="UniProtKB-KW"/>
</dbReference>
<dbReference type="GO" id="GO:0000049">
    <property type="term" value="F:tRNA binding"/>
    <property type="evidence" value="ECO:0007669"/>
    <property type="project" value="UniProtKB-KW"/>
</dbReference>
<dbReference type="GO" id="GO:0103016">
    <property type="term" value="F:tRNA-uridine 2-sulfurtransferase activity"/>
    <property type="evidence" value="ECO:0007669"/>
    <property type="project" value="UniProtKB-EC"/>
</dbReference>
<dbReference type="GO" id="GO:0002143">
    <property type="term" value="P:tRNA wobble position uridine thiolation"/>
    <property type="evidence" value="ECO:0007669"/>
    <property type="project" value="TreeGrafter"/>
</dbReference>
<dbReference type="CDD" id="cd01998">
    <property type="entry name" value="MnmA_TRMU-like"/>
    <property type="match status" value="1"/>
</dbReference>
<dbReference type="Gene3D" id="2.30.30.280">
    <property type="entry name" value="Adenine nucleotide alpha hydrolases-like domains"/>
    <property type="match status" value="1"/>
</dbReference>
<dbReference type="Gene3D" id="3.40.50.620">
    <property type="entry name" value="HUPs"/>
    <property type="match status" value="1"/>
</dbReference>
<dbReference type="Gene3D" id="2.40.30.10">
    <property type="entry name" value="Translation factors"/>
    <property type="match status" value="1"/>
</dbReference>
<dbReference type="HAMAP" id="MF_00144">
    <property type="entry name" value="tRNA_thiouridyl_MnmA"/>
    <property type="match status" value="1"/>
</dbReference>
<dbReference type="InterPro" id="IPR004506">
    <property type="entry name" value="MnmA-like"/>
</dbReference>
<dbReference type="InterPro" id="IPR046885">
    <property type="entry name" value="MnmA-like_C"/>
</dbReference>
<dbReference type="InterPro" id="IPR046884">
    <property type="entry name" value="MnmA-like_central"/>
</dbReference>
<dbReference type="InterPro" id="IPR023382">
    <property type="entry name" value="MnmA-like_central_sf"/>
</dbReference>
<dbReference type="InterPro" id="IPR014729">
    <property type="entry name" value="Rossmann-like_a/b/a_fold"/>
</dbReference>
<dbReference type="NCBIfam" id="NF001138">
    <property type="entry name" value="PRK00143.1"/>
    <property type="match status" value="1"/>
</dbReference>
<dbReference type="NCBIfam" id="TIGR00420">
    <property type="entry name" value="trmU"/>
    <property type="match status" value="1"/>
</dbReference>
<dbReference type="PANTHER" id="PTHR11933:SF5">
    <property type="entry name" value="MITOCHONDRIAL TRNA-SPECIFIC 2-THIOURIDYLASE 1"/>
    <property type="match status" value="1"/>
</dbReference>
<dbReference type="PANTHER" id="PTHR11933">
    <property type="entry name" value="TRNA 5-METHYLAMINOMETHYL-2-THIOURIDYLATE -METHYLTRANSFERASE"/>
    <property type="match status" value="1"/>
</dbReference>
<dbReference type="Pfam" id="PF03054">
    <property type="entry name" value="tRNA_Me_trans"/>
    <property type="match status" value="1"/>
</dbReference>
<dbReference type="Pfam" id="PF20258">
    <property type="entry name" value="tRNA_Me_trans_C"/>
    <property type="match status" value="1"/>
</dbReference>
<dbReference type="Pfam" id="PF20259">
    <property type="entry name" value="tRNA_Me_trans_M"/>
    <property type="match status" value="1"/>
</dbReference>
<dbReference type="SUPFAM" id="SSF52402">
    <property type="entry name" value="Adenine nucleotide alpha hydrolases-like"/>
    <property type="match status" value="1"/>
</dbReference>
<gene>
    <name evidence="1" type="primary">mnmA</name>
    <name type="ordered locus">CHAB381_1206</name>
</gene>
<proteinExistence type="inferred from homology"/>
<keyword id="KW-0067">ATP-binding</keyword>
<keyword id="KW-0963">Cytoplasm</keyword>
<keyword id="KW-1015">Disulfide bond</keyword>
<keyword id="KW-0547">Nucleotide-binding</keyword>
<keyword id="KW-1185">Reference proteome</keyword>
<keyword id="KW-0694">RNA-binding</keyword>
<keyword id="KW-0808">Transferase</keyword>
<keyword id="KW-0819">tRNA processing</keyword>
<keyword id="KW-0820">tRNA-binding</keyword>